<feature type="chain" id="PRO_0000257411" description="tRNA (guanine-N(1)-)-methyltransferase">
    <location>
        <begin position="1"/>
        <end position="248"/>
    </location>
</feature>
<feature type="binding site" evidence="1">
    <location>
        <position position="113"/>
    </location>
    <ligand>
        <name>S-adenosyl-L-methionine</name>
        <dbReference type="ChEBI" id="CHEBI:59789"/>
    </ligand>
</feature>
<feature type="binding site" evidence="1">
    <location>
        <begin position="133"/>
        <end position="138"/>
    </location>
    <ligand>
        <name>S-adenosyl-L-methionine</name>
        <dbReference type="ChEBI" id="CHEBI:59789"/>
    </ligand>
</feature>
<dbReference type="EC" id="2.1.1.228" evidence="1"/>
<dbReference type="EMBL" id="CP000027">
    <property type="protein sequence ID" value="AAW40416.1"/>
    <property type="molecule type" value="Genomic_DNA"/>
</dbReference>
<dbReference type="RefSeq" id="WP_010936119.1">
    <property type="nucleotide sequence ID" value="NC_002936.3"/>
</dbReference>
<dbReference type="SMR" id="Q3Z9L3"/>
<dbReference type="FunCoup" id="Q3Z9L3">
    <property type="interactions" value="303"/>
</dbReference>
<dbReference type="STRING" id="243164.DET0339"/>
<dbReference type="GeneID" id="3230380"/>
<dbReference type="KEGG" id="det:DET0339"/>
<dbReference type="PATRIC" id="fig|243164.10.peg.319"/>
<dbReference type="eggNOG" id="COG0336">
    <property type="taxonomic scope" value="Bacteria"/>
</dbReference>
<dbReference type="HOGENOM" id="CLU_047363_0_1_0"/>
<dbReference type="InParanoid" id="Q3Z9L3"/>
<dbReference type="Proteomes" id="UP000008289">
    <property type="component" value="Chromosome"/>
</dbReference>
<dbReference type="GO" id="GO:0005829">
    <property type="term" value="C:cytosol"/>
    <property type="evidence" value="ECO:0007669"/>
    <property type="project" value="TreeGrafter"/>
</dbReference>
<dbReference type="GO" id="GO:0052906">
    <property type="term" value="F:tRNA (guanine(37)-N1)-methyltransferase activity"/>
    <property type="evidence" value="ECO:0007669"/>
    <property type="project" value="UniProtKB-UniRule"/>
</dbReference>
<dbReference type="GO" id="GO:0002939">
    <property type="term" value="P:tRNA N1-guanine methylation"/>
    <property type="evidence" value="ECO:0007669"/>
    <property type="project" value="TreeGrafter"/>
</dbReference>
<dbReference type="CDD" id="cd18080">
    <property type="entry name" value="TrmD-like"/>
    <property type="match status" value="1"/>
</dbReference>
<dbReference type="FunFam" id="1.10.1270.20:FF:000001">
    <property type="entry name" value="tRNA (guanine-N(1)-)-methyltransferase"/>
    <property type="match status" value="1"/>
</dbReference>
<dbReference type="FunFam" id="3.40.1280.10:FF:000001">
    <property type="entry name" value="tRNA (guanine-N(1)-)-methyltransferase"/>
    <property type="match status" value="1"/>
</dbReference>
<dbReference type="Gene3D" id="3.40.1280.10">
    <property type="match status" value="1"/>
</dbReference>
<dbReference type="Gene3D" id="1.10.1270.20">
    <property type="entry name" value="tRNA(m1g37)methyltransferase, domain 2"/>
    <property type="match status" value="1"/>
</dbReference>
<dbReference type="HAMAP" id="MF_00605">
    <property type="entry name" value="TrmD"/>
    <property type="match status" value="1"/>
</dbReference>
<dbReference type="InterPro" id="IPR029028">
    <property type="entry name" value="Alpha/beta_knot_MTases"/>
</dbReference>
<dbReference type="InterPro" id="IPR023148">
    <property type="entry name" value="tRNA_m1G_MeTrfase_C_sf"/>
</dbReference>
<dbReference type="InterPro" id="IPR002649">
    <property type="entry name" value="tRNA_m1G_MeTrfase_TrmD"/>
</dbReference>
<dbReference type="InterPro" id="IPR029026">
    <property type="entry name" value="tRNA_m1G_MTases_N"/>
</dbReference>
<dbReference type="InterPro" id="IPR016009">
    <property type="entry name" value="tRNA_MeTrfase_TRMD/TRM10"/>
</dbReference>
<dbReference type="NCBIfam" id="NF000648">
    <property type="entry name" value="PRK00026.1"/>
    <property type="match status" value="1"/>
</dbReference>
<dbReference type="NCBIfam" id="TIGR00088">
    <property type="entry name" value="trmD"/>
    <property type="match status" value="1"/>
</dbReference>
<dbReference type="PANTHER" id="PTHR46417">
    <property type="entry name" value="TRNA (GUANINE-N(1)-)-METHYLTRANSFERASE"/>
    <property type="match status" value="1"/>
</dbReference>
<dbReference type="PANTHER" id="PTHR46417:SF1">
    <property type="entry name" value="TRNA (GUANINE-N(1)-)-METHYLTRANSFERASE"/>
    <property type="match status" value="1"/>
</dbReference>
<dbReference type="Pfam" id="PF01746">
    <property type="entry name" value="tRNA_m1G_MT"/>
    <property type="match status" value="1"/>
</dbReference>
<dbReference type="PIRSF" id="PIRSF000386">
    <property type="entry name" value="tRNA_mtase"/>
    <property type="match status" value="1"/>
</dbReference>
<dbReference type="SUPFAM" id="SSF75217">
    <property type="entry name" value="alpha/beta knot"/>
    <property type="match status" value="1"/>
</dbReference>
<reference key="1">
    <citation type="journal article" date="2005" name="Science">
        <title>Genome sequence of the PCE-dechlorinating bacterium Dehalococcoides ethenogenes.</title>
        <authorList>
            <person name="Seshadri R."/>
            <person name="Adrian L."/>
            <person name="Fouts D.E."/>
            <person name="Eisen J.A."/>
            <person name="Phillippy A.M."/>
            <person name="Methe B.A."/>
            <person name="Ward N.L."/>
            <person name="Nelson W.C."/>
            <person name="DeBoy R.T."/>
            <person name="Khouri H.M."/>
            <person name="Kolonay J.F."/>
            <person name="Dodson R.J."/>
            <person name="Daugherty S.C."/>
            <person name="Brinkac L.M."/>
            <person name="Sullivan S.A."/>
            <person name="Madupu R."/>
            <person name="Nelson K.E."/>
            <person name="Kang K.H."/>
            <person name="Impraim M."/>
            <person name="Tran K."/>
            <person name="Robinson J.M."/>
            <person name="Forberger H.A."/>
            <person name="Fraser C.M."/>
            <person name="Zinder S.H."/>
            <person name="Heidelberg J.F."/>
        </authorList>
    </citation>
    <scope>NUCLEOTIDE SEQUENCE [LARGE SCALE GENOMIC DNA]</scope>
    <source>
        <strain>ATCC BAA-2266 / KCTC 15142 / 195</strain>
    </source>
</reference>
<name>TRMD_DEHM1</name>
<sequence>MKIDVLTLFPEMFQSPFEESIFKRAADKNLVRLEIHNFRDFSHDKHHAVDDTPYGGGAGMLLKPEPLFEAVEAVMEKDPTPAPVILLSPQGRTFNQSVARELANHQRLIIICGHYEGFDERVREHLATDEISIGDFVLTGGELAAMVVIDAVSRLIPGVLGSDDSSESDSHSNGLLEHPHYTRPPVFRGWDIPEVLLSGNHARIDRWRRKESLRRTLKRRPDMLEKITLSKADRKLIDEILAEENPKD</sequence>
<evidence type="ECO:0000255" key="1">
    <source>
        <dbReference type="HAMAP-Rule" id="MF_00605"/>
    </source>
</evidence>
<organism>
    <name type="scientific">Dehalococcoides mccartyi (strain ATCC BAA-2266 / KCTC 15142 / 195)</name>
    <name type="common">Dehalococcoides ethenogenes (strain 195)</name>
    <dbReference type="NCBI Taxonomy" id="243164"/>
    <lineage>
        <taxon>Bacteria</taxon>
        <taxon>Bacillati</taxon>
        <taxon>Chloroflexota</taxon>
        <taxon>Dehalococcoidia</taxon>
        <taxon>Dehalococcoidales</taxon>
        <taxon>Dehalococcoidaceae</taxon>
        <taxon>Dehalococcoides</taxon>
    </lineage>
</organism>
<accession>Q3Z9L3</accession>
<proteinExistence type="inferred from homology"/>
<gene>
    <name evidence="1" type="primary">trmD</name>
    <name type="ordered locus">DET0339</name>
</gene>
<protein>
    <recommendedName>
        <fullName evidence="1">tRNA (guanine-N(1)-)-methyltransferase</fullName>
        <ecNumber evidence="1">2.1.1.228</ecNumber>
    </recommendedName>
    <alternativeName>
        <fullName evidence="1">M1G-methyltransferase</fullName>
    </alternativeName>
    <alternativeName>
        <fullName evidence="1">tRNA [GM37] methyltransferase</fullName>
    </alternativeName>
</protein>
<comment type="function">
    <text evidence="1">Specifically methylates guanosine-37 in various tRNAs.</text>
</comment>
<comment type="catalytic activity">
    <reaction evidence="1">
        <text>guanosine(37) in tRNA + S-adenosyl-L-methionine = N(1)-methylguanosine(37) in tRNA + S-adenosyl-L-homocysteine + H(+)</text>
        <dbReference type="Rhea" id="RHEA:36899"/>
        <dbReference type="Rhea" id="RHEA-COMP:10145"/>
        <dbReference type="Rhea" id="RHEA-COMP:10147"/>
        <dbReference type="ChEBI" id="CHEBI:15378"/>
        <dbReference type="ChEBI" id="CHEBI:57856"/>
        <dbReference type="ChEBI" id="CHEBI:59789"/>
        <dbReference type="ChEBI" id="CHEBI:73542"/>
        <dbReference type="ChEBI" id="CHEBI:74269"/>
        <dbReference type="EC" id="2.1.1.228"/>
    </reaction>
</comment>
<comment type="subunit">
    <text evidence="1">Homodimer.</text>
</comment>
<comment type="subcellular location">
    <subcellularLocation>
        <location evidence="1">Cytoplasm</location>
    </subcellularLocation>
</comment>
<comment type="similarity">
    <text evidence="1">Belongs to the RNA methyltransferase TrmD family.</text>
</comment>
<keyword id="KW-0963">Cytoplasm</keyword>
<keyword id="KW-0489">Methyltransferase</keyword>
<keyword id="KW-0949">S-adenosyl-L-methionine</keyword>
<keyword id="KW-0808">Transferase</keyword>
<keyword id="KW-0819">tRNA processing</keyword>